<gene>
    <name evidence="1" type="primary">mukF</name>
    <name type="ordered locus">ECED1_0952</name>
</gene>
<protein>
    <recommendedName>
        <fullName evidence="1">Chromosome partition protein MukF</fullName>
    </recommendedName>
</protein>
<comment type="function">
    <text evidence="1">Involved in chromosome condensation, segregation and cell cycle progression. May participate in facilitating chromosome segregation by condensation DNA from both sides of a centrally located replisome during cell division. Not required for mini-F plasmid partitioning. Probably acts via its interaction with MukB and MukE. Overexpression results in anucleate cells. It has a calcium binding activity.</text>
</comment>
<comment type="subunit">
    <text evidence="1">Interacts, and probably forms a ternary complex, with MukE and MukB via its C-terminal region. The complex formation is stimulated by calcium or magnesium. It is required for an interaction between MukE and MukB.</text>
</comment>
<comment type="subcellular location">
    <subcellularLocation>
        <location evidence="1">Cytoplasm</location>
        <location evidence="1">Nucleoid</location>
    </subcellularLocation>
    <text evidence="1">Restricted to the nucleoid region.</text>
</comment>
<comment type="similarity">
    <text evidence="1">Belongs to the MukF family.</text>
</comment>
<proteinExistence type="inferred from homology"/>
<reference key="1">
    <citation type="journal article" date="2009" name="PLoS Genet.">
        <title>Organised genome dynamics in the Escherichia coli species results in highly diverse adaptive paths.</title>
        <authorList>
            <person name="Touchon M."/>
            <person name="Hoede C."/>
            <person name="Tenaillon O."/>
            <person name="Barbe V."/>
            <person name="Baeriswyl S."/>
            <person name="Bidet P."/>
            <person name="Bingen E."/>
            <person name="Bonacorsi S."/>
            <person name="Bouchier C."/>
            <person name="Bouvet O."/>
            <person name="Calteau A."/>
            <person name="Chiapello H."/>
            <person name="Clermont O."/>
            <person name="Cruveiller S."/>
            <person name="Danchin A."/>
            <person name="Diard M."/>
            <person name="Dossat C."/>
            <person name="Karoui M.E."/>
            <person name="Frapy E."/>
            <person name="Garry L."/>
            <person name="Ghigo J.M."/>
            <person name="Gilles A.M."/>
            <person name="Johnson J."/>
            <person name="Le Bouguenec C."/>
            <person name="Lescat M."/>
            <person name="Mangenot S."/>
            <person name="Martinez-Jehanne V."/>
            <person name="Matic I."/>
            <person name="Nassif X."/>
            <person name="Oztas S."/>
            <person name="Petit M.A."/>
            <person name="Pichon C."/>
            <person name="Rouy Z."/>
            <person name="Ruf C.S."/>
            <person name="Schneider D."/>
            <person name="Tourret J."/>
            <person name="Vacherie B."/>
            <person name="Vallenet D."/>
            <person name="Medigue C."/>
            <person name="Rocha E.P.C."/>
            <person name="Denamur E."/>
        </authorList>
    </citation>
    <scope>NUCLEOTIDE SEQUENCE [LARGE SCALE GENOMIC DNA]</scope>
    <source>
        <strain>ED1a</strain>
    </source>
</reference>
<dbReference type="EMBL" id="CU928162">
    <property type="protein sequence ID" value="CAR07154.1"/>
    <property type="molecule type" value="Genomic_DNA"/>
</dbReference>
<dbReference type="RefSeq" id="WP_001288856.1">
    <property type="nucleotide sequence ID" value="NC_011745.1"/>
</dbReference>
<dbReference type="SMR" id="B7MS40"/>
<dbReference type="KEGG" id="ecq:ECED1_0952"/>
<dbReference type="HOGENOM" id="CLU_049853_0_0_6"/>
<dbReference type="Proteomes" id="UP000000748">
    <property type="component" value="Chromosome"/>
</dbReference>
<dbReference type="GO" id="GO:0005737">
    <property type="term" value="C:cytoplasm"/>
    <property type="evidence" value="ECO:0007669"/>
    <property type="project" value="UniProtKB-UniRule"/>
</dbReference>
<dbReference type="GO" id="GO:0009295">
    <property type="term" value="C:nucleoid"/>
    <property type="evidence" value="ECO:0007669"/>
    <property type="project" value="UniProtKB-SubCell"/>
</dbReference>
<dbReference type="GO" id="GO:0005509">
    <property type="term" value="F:calcium ion binding"/>
    <property type="evidence" value="ECO:0007669"/>
    <property type="project" value="UniProtKB-UniRule"/>
</dbReference>
<dbReference type="GO" id="GO:0051301">
    <property type="term" value="P:cell division"/>
    <property type="evidence" value="ECO:0007669"/>
    <property type="project" value="UniProtKB-KW"/>
</dbReference>
<dbReference type="GO" id="GO:0030261">
    <property type="term" value="P:chromosome condensation"/>
    <property type="evidence" value="ECO:0007669"/>
    <property type="project" value="UniProtKB-KW"/>
</dbReference>
<dbReference type="GO" id="GO:0007059">
    <property type="term" value="P:chromosome segregation"/>
    <property type="evidence" value="ECO:0007669"/>
    <property type="project" value="UniProtKB-UniRule"/>
</dbReference>
<dbReference type="GO" id="GO:0006260">
    <property type="term" value="P:DNA replication"/>
    <property type="evidence" value="ECO:0007669"/>
    <property type="project" value="UniProtKB-UniRule"/>
</dbReference>
<dbReference type="CDD" id="cd16337">
    <property type="entry name" value="MukF_C"/>
    <property type="match status" value="1"/>
</dbReference>
<dbReference type="CDD" id="cd16335">
    <property type="entry name" value="MukF_N"/>
    <property type="match status" value="1"/>
</dbReference>
<dbReference type="Gene3D" id="1.20.58.590">
    <property type="entry name" value="Chromosome partition protein MukF, middle domain"/>
    <property type="match status" value="1"/>
</dbReference>
<dbReference type="Gene3D" id="1.10.225.40">
    <property type="entry name" value="MukF, C-terminal domain"/>
    <property type="match status" value="1"/>
</dbReference>
<dbReference type="Gene3D" id="1.10.10.10">
    <property type="entry name" value="Winged helix-like DNA-binding domain superfamily/Winged helix DNA-binding domain"/>
    <property type="match status" value="1"/>
</dbReference>
<dbReference type="HAMAP" id="MF_01803">
    <property type="entry name" value="MukF"/>
    <property type="match status" value="1"/>
</dbReference>
<dbReference type="InterPro" id="IPR005582">
    <property type="entry name" value="Chromosome_partition_MukF"/>
</dbReference>
<dbReference type="InterPro" id="IPR033441">
    <property type="entry name" value="MukF_C"/>
</dbReference>
<dbReference type="InterPro" id="IPR038198">
    <property type="entry name" value="MukF_C_sf"/>
</dbReference>
<dbReference type="InterPro" id="IPR033440">
    <property type="entry name" value="MukF_M"/>
</dbReference>
<dbReference type="InterPro" id="IPR036141">
    <property type="entry name" value="MukF_M_sp"/>
</dbReference>
<dbReference type="InterPro" id="IPR033439">
    <property type="entry name" value="MukF_WHTH"/>
</dbReference>
<dbReference type="InterPro" id="IPR036388">
    <property type="entry name" value="WH-like_DNA-bd_sf"/>
</dbReference>
<dbReference type="InterPro" id="IPR036390">
    <property type="entry name" value="WH_DNA-bd_sf"/>
</dbReference>
<dbReference type="NCBIfam" id="NF003615">
    <property type="entry name" value="PRK05260.1"/>
    <property type="match status" value="1"/>
</dbReference>
<dbReference type="Pfam" id="PF03882">
    <property type="entry name" value="KicB"/>
    <property type="match status" value="1"/>
</dbReference>
<dbReference type="Pfam" id="PF17193">
    <property type="entry name" value="MukF_C"/>
    <property type="match status" value="1"/>
</dbReference>
<dbReference type="Pfam" id="PF17192">
    <property type="entry name" value="MukF_M"/>
    <property type="match status" value="1"/>
</dbReference>
<dbReference type="PIRSF" id="PIRSF018282">
    <property type="entry name" value="MukF"/>
    <property type="match status" value="1"/>
</dbReference>
<dbReference type="SUPFAM" id="SSF140570">
    <property type="entry name" value="MukF C-terminal domain-like"/>
    <property type="match status" value="1"/>
</dbReference>
<dbReference type="SUPFAM" id="SSF46785">
    <property type="entry name" value="Winged helix' DNA-binding domain"/>
    <property type="match status" value="1"/>
</dbReference>
<accession>B7MS40</accession>
<feature type="chain" id="PRO_1000187503" description="Chromosome partition protein MukF">
    <location>
        <begin position="1"/>
        <end position="440"/>
    </location>
</feature>
<feature type="region of interest" description="Leucine-zipper">
    <location>
        <begin position="208"/>
        <end position="236"/>
    </location>
</feature>
<evidence type="ECO:0000255" key="1">
    <source>
        <dbReference type="HAMAP-Rule" id="MF_01803"/>
    </source>
</evidence>
<keyword id="KW-0106">Calcium</keyword>
<keyword id="KW-0131">Cell cycle</keyword>
<keyword id="KW-0132">Cell division</keyword>
<keyword id="KW-0159">Chromosome partition</keyword>
<keyword id="KW-0963">Cytoplasm</keyword>
<keyword id="KW-0226">DNA condensation</keyword>
<name>MUKF_ECO81</name>
<sequence length="440" mass="50607">MSEFSQTVPELVAWARKNDFSISLPVDRLSFLLAVATLNGERLDGEMSEGELVDAFRHVSDAFEQTSETIGVRANNAINDMVRQRLLNRFTSEQAEGNAIYRLTPLGIGITDYYIRQREFSTLRLSMQLSIVAGELKRAADAAEEGGDEFHWHRNVYAPLKYSVAEIFDSIDLTQRLMDEQQQQVKDDIAQLLNKDWRAAISSCELLLSETSGTLRELQDTLEAAGDKLQANLLRIQDATMTHDDLHFVDRLVFDLQSKLDRIISWGQQSIDLWIGYDRHVHKFIRTAIDMDKNRVFAQRLRQSVQTYFDEPWALTYANADRLLDMRDEEMVLRDEEVTGELPEDLEYEEFNEIREQLAAIIEEQLAVYKTRQVPLDLGLVVREYLSQYPRARHFDVARIVIDQAVRLGVAQADFTGLPAKWQPINDYGAKVQAHVIDKY</sequence>
<organism>
    <name type="scientific">Escherichia coli O81 (strain ED1a)</name>
    <dbReference type="NCBI Taxonomy" id="585397"/>
    <lineage>
        <taxon>Bacteria</taxon>
        <taxon>Pseudomonadati</taxon>
        <taxon>Pseudomonadota</taxon>
        <taxon>Gammaproteobacteria</taxon>
        <taxon>Enterobacterales</taxon>
        <taxon>Enterobacteriaceae</taxon>
        <taxon>Escherichia</taxon>
    </lineage>
</organism>